<gene>
    <name type="ordered locus">ECSE_2185</name>
</gene>
<proteinExistence type="inferred from homology"/>
<comment type="catalytic activity">
    <reaction evidence="1">
        <text>2-O-(alpha-D-mannosyl)-3-phosphoglycerate + H2O = (2R)-2-O-(alpha-D-mannosyl)-glycerate + phosphate</text>
        <dbReference type="Rhea" id="RHEA:19309"/>
        <dbReference type="ChEBI" id="CHEBI:15377"/>
        <dbReference type="ChEBI" id="CHEBI:43474"/>
        <dbReference type="ChEBI" id="CHEBI:57541"/>
        <dbReference type="ChEBI" id="CHEBI:57744"/>
        <dbReference type="EC" id="3.1.3.70"/>
    </reaction>
</comment>
<comment type="cofactor">
    <cofactor evidence="1">
        <name>Mg(2+)</name>
        <dbReference type="ChEBI" id="CHEBI:18420"/>
    </cofactor>
</comment>
<comment type="subcellular location">
    <subcellularLocation>
        <location evidence="1">Cytoplasm</location>
    </subcellularLocation>
</comment>
<comment type="similarity">
    <text evidence="1">Belongs to the HAD-like hydrolase superfamily. MPGP family.</text>
</comment>
<keyword id="KW-0963">Cytoplasm</keyword>
<keyword id="KW-0378">Hydrolase</keyword>
<keyword id="KW-0460">Magnesium</keyword>
<keyword id="KW-0479">Metal-binding</keyword>
<name>MPGP_ECOSE</name>
<reference key="1">
    <citation type="journal article" date="2008" name="DNA Res.">
        <title>Complete genome sequence and comparative analysis of the wild-type commensal Escherichia coli strain SE11 isolated from a healthy adult.</title>
        <authorList>
            <person name="Oshima K."/>
            <person name="Toh H."/>
            <person name="Ogura Y."/>
            <person name="Sasamoto H."/>
            <person name="Morita H."/>
            <person name="Park S.-H."/>
            <person name="Ooka T."/>
            <person name="Iyoda S."/>
            <person name="Taylor T.D."/>
            <person name="Hayashi T."/>
            <person name="Itoh K."/>
            <person name="Hattori M."/>
        </authorList>
    </citation>
    <scope>NUCLEOTIDE SEQUENCE [LARGE SCALE GENOMIC DNA]</scope>
    <source>
        <strain>SE11</strain>
    </source>
</reference>
<evidence type="ECO:0000255" key="1">
    <source>
        <dbReference type="HAMAP-Rule" id="MF_00617"/>
    </source>
</evidence>
<accession>B6I101</accession>
<sequence>MFSIQQPLLVFSDLDGTLLDSHSYDWQPAAPWLSRLREANVPVILCSSKTSAEMLYLQKTLGLQGLPLIAENGAVIQLAEQWQDIDGFPRIISGISHGEISQVLNTLREKEHFKFTTFDDVDDATIAEWTGLSRSQAALTQLHEASVTLIWRDSDERMAQFTARLNELGLQFMQGARFWHVLDASAGKDQAANWIIATYQQLSGKRPTTLGLGDGPNDAPLLEVMDYAVIVKGLNREGVHLHDEDPARVWRTQREGPEGWREGLDHFFSAR</sequence>
<organism>
    <name type="scientific">Escherichia coli (strain SE11)</name>
    <dbReference type="NCBI Taxonomy" id="409438"/>
    <lineage>
        <taxon>Bacteria</taxon>
        <taxon>Pseudomonadati</taxon>
        <taxon>Pseudomonadota</taxon>
        <taxon>Gammaproteobacteria</taxon>
        <taxon>Enterobacterales</taxon>
        <taxon>Enterobacteriaceae</taxon>
        <taxon>Escherichia</taxon>
    </lineage>
</organism>
<dbReference type="EC" id="3.1.3.70" evidence="1"/>
<dbReference type="EMBL" id="AP009240">
    <property type="protein sequence ID" value="BAG77709.1"/>
    <property type="molecule type" value="Genomic_DNA"/>
</dbReference>
<dbReference type="RefSeq" id="WP_000491500.1">
    <property type="nucleotide sequence ID" value="NC_011415.1"/>
</dbReference>
<dbReference type="SMR" id="B6I101"/>
<dbReference type="KEGG" id="ecy:ECSE_2185"/>
<dbReference type="HOGENOM" id="CLU_063016_1_0_6"/>
<dbReference type="Proteomes" id="UP000008199">
    <property type="component" value="Chromosome"/>
</dbReference>
<dbReference type="GO" id="GO:0005829">
    <property type="term" value="C:cytosol"/>
    <property type="evidence" value="ECO:0007669"/>
    <property type="project" value="TreeGrafter"/>
</dbReference>
<dbReference type="GO" id="GO:0000287">
    <property type="term" value="F:magnesium ion binding"/>
    <property type="evidence" value="ECO:0007669"/>
    <property type="project" value="UniProtKB-ARBA"/>
</dbReference>
<dbReference type="GO" id="GO:0050531">
    <property type="term" value="F:mannosyl-3-phosphoglycerate phosphatase activity"/>
    <property type="evidence" value="ECO:0007669"/>
    <property type="project" value="UniProtKB-UniRule"/>
</dbReference>
<dbReference type="GO" id="GO:0051479">
    <property type="term" value="P:mannosylglycerate biosynthetic process"/>
    <property type="evidence" value="ECO:0007669"/>
    <property type="project" value="InterPro"/>
</dbReference>
<dbReference type="CDD" id="cd07507">
    <property type="entry name" value="HAD_Pase"/>
    <property type="match status" value="1"/>
</dbReference>
<dbReference type="Gene3D" id="3.40.50.1000">
    <property type="entry name" value="HAD superfamily/HAD-like"/>
    <property type="match status" value="1"/>
</dbReference>
<dbReference type="Gene3D" id="3.30.980.20">
    <property type="entry name" value="Putative mannosyl-3-phosphoglycerate phosphatase, domain 2"/>
    <property type="match status" value="1"/>
</dbReference>
<dbReference type="HAMAP" id="MF_00617">
    <property type="entry name" value="MPGP_rel"/>
    <property type="match status" value="1"/>
</dbReference>
<dbReference type="InterPro" id="IPR036412">
    <property type="entry name" value="HAD-like_sf"/>
</dbReference>
<dbReference type="InterPro" id="IPR006381">
    <property type="entry name" value="HAD-SF-IIB-MPGP"/>
</dbReference>
<dbReference type="InterPro" id="IPR006379">
    <property type="entry name" value="HAD-SF_hydro_IIB"/>
</dbReference>
<dbReference type="InterPro" id="IPR023214">
    <property type="entry name" value="HAD_sf"/>
</dbReference>
<dbReference type="InterPro" id="IPR012815">
    <property type="entry name" value="MPG_Pase"/>
</dbReference>
<dbReference type="NCBIfam" id="TIGR01484">
    <property type="entry name" value="HAD-SF-IIB"/>
    <property type="match status" value="1"/>
</dbReference>
<dbReference type="NCBIfam" id="TIGR01486">
    <property type="entry name" value="HAD-SF-IIB-MPGP"/>
    <property type="match status" value="1"/>
</dbReference>
<dbReference type="NCBIfam" id="TIGR02463">
    <property type="entry name" value="MPGP_rel"/>
    <property type="match status" value="1"/>
</dbReference>
<dbReference type="NCBIfam" id="NF002976">
    <property type="entry name" value="PRK03669.1"/>
    <property type="match status" value="1"/>
</dbReference>
<dbReference type="PANTHER" id="PTHR10000:SF8">
    <property type="entry name" value="HAD SUPERFAMILY HYDROLASE-LIKE, TYPE 3"/>
    <property type="match status" value="1"/>
</dbReference>
<dbReference type="PANTHER" id="PTHR10000">
    <property type="entry name" value="PHOSPHOSERINE PHOSPHATASE"/>
    <property type="match status" value="1"/>
</dbReference>
<dbReference type="Pfam" id="PF08282">
    <property type="entry name" value="Hydrolase_3"/>
    <property type="match status" value="1"/>
</dbReference>
<dbReference type="SFLD" id="SFLDG01142">
    <property type="entry name" value="C2.B.2:_Mannosyl-3-phosphoglyc"/>
    <property type="match status" value="1"/>
</dbReference>
<dbReference type="SFLD" id="SFLDG01140">
    <property type="entry name" value="C2.B:_Phosphomannomutase_and_P"/>
    <property type="match status" value="1"/>
</dbReference>
<dbReference type="SUPFAM" id="SSF56784">
    <property type="entry name" value="HAD-like"/>
    <property type="match status" value="1"/>
</dbReference>
<protein>
    <recommendedName>
        <fullName evidence="1">Mannosyl-3-phosphoglycerate phosphatase</fullName>
        <shortName evidence="1">MPGP</shortName>
        <ecNumber evidence="1">3.1.3.70</ecNumber>
    </recommendedName>
</protein>
<feature type="chain" id="PRO_1000130436" description="Mannosyl-3-phosphoglycerate phosphatase">
    <location>
        <begin position="1"/>
        <end position="271"/>
    </location>
</feature>
<feature type="active site" description="Nucleophile" evidence="1">
    <location>
        <position position="13"/>
    </location>
</feature>
<feature type="binding site" evidence="1">
    <location>
        <position position="13"/>
    </location>
    <ligand>
        <name>Mg(2+)</name>
        <dbReference type="ChEBI" id="CHEBI:18420"/>
    </ligand>
</feature>
<feature type="binding site" evidence="1">
    <location>
        <position position="15"/>
    </location>
    <ligand>
        <name>Mg(2+)</name>
        <dbReference type="ChEBI" id="CHEBI:18420"/>
    </ligand>
</feature>
<feature type="binding site" evidence="1">
    <location>
        <position position="214"/>
    </location>
    <ligand>
        <name>Mg(2+)</name>
        <dbReference type="ChEBI" id="CHEBI:18420"/>
    </ligand>
</feature>